<keyword id="KW-0687">Ribonucleoprotein</keyword>
<keyword id="KW-0689">Ribosomal protein</keyword>
<keyword id="KW-0694">RNA-binding</keyword>
<keyword id="KW-0699">rRNA-binding</keyword>
<dbReference type="EMBL" id="AE017198">
    <property type="protein sequence ID" value="AAS08827.1"/>
    <property type="molecule type" value="Genomic_DNA"/>
</dbReference>
<dbReference type="EMBL" id="AY372049">
    <property type="protein sequence ID" value="AAR25452.1"/>
    <property type="molecule type" value="Genomic_DNA"/>
</dbReference>
<dbReference type="RefSeq" id="WP_011161866.1">
    <property type="nucleotide sequence ID" value="NC_005362.1"/>
</dbReference>
<dbReference type="SMR" id="Q74JV0"/>
<dbReference type="GeneID" id="83570560"/>
<dbReference type="KEGG" id="ljo:LJ_1005"/>
<dbReference type="eggNOG" id="COG0268">
    <property type="taxonomic scope" value="Bacteria"/>
</dbReference>
<dbReference type="HOGENOM" id="CLU_160655_1_1_9"/>
<dbReference type="Proteomes" id="UP000000581">
    <property type="component" value="Chromosome"/>
</dbReference>
<dbReference type="GO" id="GO:0005829">
    <property type="term" value="C:cytosol"/>
    <property type="evidence" value="ECO:0007669"/>
    <property type="project" value="TreeGrafter"/>
</dbReference>
<dbReference type="GO" id="GO:0015935">
    <property type="term" value="C:small ribosomal subunit"/>
    <property type="evidence" value="ECO:0007669"/>
    <property type="project" value="TreeGrafter"/>
</dbReference>
<dbReference type="GO" id="GO:0070181">
    <property type="term" value="F:small ribosomal subunit rRNA binding"/>
    <property type="evidence" value="ECO:0007669"/>
    <property type="project" value="TreeGrafter"/>
</dbReference>
<dbReference type="GO" id="GO:0003735">
    <property type="term" value="F:structural constituent of ribosome"/>
    <property type="evidence" value="ECO:0007669"/>
    <property type="project" value="InterPro"/>
</dbReference>
<dbReference type="GO" id="GO:0006412">
    <property type="term" value="P:translation"/>
    <property type="evidence" value="ECO:0007669"/>
    <property type="project" value="UniProtKB-UniRule"/>
</dbReference>
<dbReference type="Gene3D" id="1.20.58.110">
    <property type="entry name" value="Ribosomal protein S20"/>
    <property type="match status" value="1"/>
</dbReference>
<dbReference type="HAMAP" id="MF_00500">
    <property type="entry name" value="Ribosomal_bS20"/>
    <property type="match status" value="1"/>
</dbReference>
<dbReference type="InterPro" id="IPR002583">
    <property type="entry name" value="Ribosomal_bS20"/>
</dbReference>
<dbReference type="InterPro" id="IPR036510">
    <property type="entry name" value="Ribosomal_bS20_sf"/>
</dbReference>
<dbReference type="NCBIfam" id="TIGR00029">
    <property type="entry name" value="S20"/>
    <property type="match status" value="1"/>
</dbReference>
<dbReference type="PANTHER" id="PTHR33398">
    <property type="entry name" value="30S RIBOSOMAL PROTEIN S20"/>
    <property type="match status" value="1"/>
</dbReference>
<dbReference type="PANTHER" id="PTHR33398:SF1">
    <property type="entry name" value="SMALL RIBOSOMAL SUBUNIT PROTEIN BS20C"/>
    <property type="match status" value="1"/>
</dbReference>
<dbReference type="Pfam" id="PF01649">
    <property type="entry name" value="Ribosomal_S20p"/>
    <property type="match status" value="1"/>
</dbReference>
<dbReference type="SUPFAM" id="SSF46992">
    <property type="entry name" value="Ribosomal protein S20"/>
    <property type="match status" value="1"/>
</dbReference>
<evidence type="ECO:0000255" key="1">
    <source>
        <dbReference type="HAMAP-Rule" id="MF_00500"/>
    </source>
</evidence>
<evidence type="ECO:0000305" key="2"/>
<organism>
    <name type="scientific">Lactobacillus johnsonii (strain CNCM I-12250 / La1 / NCC 533)</name>
    <dbReference type="NCBI Taxonomy" id="257314"/>
    <lineage>
        <taxon>Bacteria</taxon>
        <taxon>Bacillati</taxon>
        <taxon>Bacillota</taxon>
        <taxon>Bacilli</taxon>
        <taxon>Lactobacillales</taxon>
        <taxon>Lactobacillaceae</taxon>
        <taxon>Lactobacillus</taxon>
    </lineage>
</organism>
<reference key="1">
    <citation type="journal article" date="2004" name="Proc. Natl. Acad. Sci. U.S.A.">
        <title>The genome sequence of the probiotic intestinal bacterium Lactobacillus johnsonii NCC 533.</title>
        <authorList>
            <person name="Pridmore R.D."/>
            <person name="Berger B."/>
            <person name="Desiere F."/>
            <person name="Vilanova D."/>
            <person name="Barretto C."/>
            <person name="Pittet A.-C."/>
            <person name="Zwahlen M.-C."/>
            <person name="Rouvet M."/>
            <person name="Altermann E."/>
            <person name="Barrangou R."/>
            <person name="Mollet B."/>
            <person name="Mercenier A."/>
            <person name="Klaenhammer T."/>
            <person name="Arigoni F."/>
            <person name="Schell M.A."/>
        </authorList>
    </citation>
    <scope>NUCLEOTIDE SEQUENCE [LARGE SCALE GENOMIC DNA]</scope>
    <source>
        <strain>CNCM I-1225 / La1 / NCC 533</strain>
    </source>
</reference>
<reference key="2">
    <citation type="journal article" date="2003" name="Appl. Environ. Microbiol.">
        <title>Analysis, characterization, and loci of the tuf genes in lactobacillus and bifidobacterium species and their direct application for species identification.</title>
        <authorList>
            <person name="Ventura M."/>
            <person name="Canchaya C."/>
            <person name="Meylan V."/>
            <person name="Klaenhammer T.R."/>
            <person name="Zink R."/>
        </authorList>
    </citation>
    <scope>NUCLEOTIDE SEQUENCE [GENOMIC DNA]</scope>
    <source>
        <strain>CNCM I-1225 / La1 / NCC 533</strain>
    </source>
</reference>
<protein>
    <recommendedName>
        <fullName evidence="1">Small ribosomal subunit protein bS20</fullName>
    </recommendedName>
    <alternativeName>
        <fullName evidence="2">30S ribosomal protein S20</fullName>
    </alternativeName>
</protein>
<gene>
    <name evidence="1" type="primary">rpsT</name>
    <name type="ordered locus">LJ_1005</name>
</gene>
<proteinExistence type="inferred from homology"/>
<accession>Q74JV0</accession>
<accession>Q6UE14</accession>
<name>RS20_LACJO</name>
<feature type="chain" id="PRO_0000167976" description="Small ribosomal subunit protein bS20">
    <location>
        <begin position="1"/>
        <end position="85"/>
    </location>
</feature>
<comment type="function">
    <text evidence="1">Binds directly to 16S ribosomal RNA.</text>
</comment>
<comment type="similarity">
    <text evidence="1">Belongs to the bacterial ribosomal protein bS20 family.</text>
</comment>
<sequence>MPQIKSAIKRVKTNATANKRNAAELSKLRTAVRKFNEAVENDAKDVLDLEVKAARALDKAASKGLISKNKANRDKSRLSKKAANK</sequence>